<sequence>MAKEKFDRSKPHVNIGTIGHVDHGKTTLTAAITTVLAKKGYADAQAYDQIDGAPEERERGITISTAHVEYQTDSRHYAHVDCPGHADYVKNMITGAAQMDGAILVVSAADGPMPQTREHILLSRQVGVPYIVVFMNKCDMVDDEELLELVEMEIRDLLTEYEFPGDDIPVIKGSALKALQGEADWEAKIDELMEAVDSYIPTPERDTDKPFMMPVEDVFSITGRGTVATGRVERGQVKVGDEVEVIGIEEESKKVVVTGVEMFRKLLDYAEAGDNIGALLRGVAREDIQRGQVLAKPGSITPHTNFKAETYVLTKEEGGRHTPFFNNYRPQFYFRTTDVTGIVTLPEGTEMVMPGDNIELAVELIAPIAIEDGTKFSIREGGRTVGAGVVSNISK</sequence>
<gene>
    <name evidence="2" type="primary">tuf</name>
    <name type="ordered locus">Lm4b_02625</name>
</gene>
<name>EFTU_LISMC</name>
<keyword id="KW-0963">Cytoplasm</keyword>
<keyword id="KW-0251">Elongation factor</keyword>
<keyword id="KW-0342">GTP-binding</keyword>
<keyword id="KW-0378">Hydrolase</keyword>
<keyword id="KW-0460">Magnesium</keyword>
<keyword id="KW-0479">Metal-binding</keyword>
<keyword id="KW-0547">Nucleotide-binding</keyword>
<keyword id="KW-0648">Protein biosynthesis</keyword>
<feature type="chain" id="PRO_1000203015" description="Elongation factor Tu">
    <location>
        <begin position="1"/>
        <end position="395"/>
    </location>
</feature>
<feature type="domain" description="tr-type G">
    <location>
        <begin position="10"/>
        <end position="204"/>
    </location>
</feature>
<feature type="region of interest" description="G1" evidence="1">
    <location>
        <begin position="19"/>
        <end position="26"/>
    </location>
</feature>
<feature type="region of interest" description="G2" evidence="1">
    <location>
        <begin position="60"/>
        <end position="64"/>
    </location>
</feature>
<feature type="region of interest" description="G3" evidence="1">
    <location>
        <begin position="81"/>
        <end position="84"/>
    </location>
</feature>
<feature type="region of interest" description="G4" evidence="1">
    <location>
        <begin position="136"/>
        <end position="139"/>
    </location>
</feature>
<feature type="region of interest" description="G5" evidence="1">
    <location>
        <begin position="174"/>
        <end position="176"/>
    </location>
</feature>
<feature type="binding site" evidence="2">
    <location>
        <begin position="19"/>
        <end position="26"/>
    </location>
    <ligand>
        <name>GTP</name>
        <dbReference type="ChEBI" id="CHEBI:37565"/>
    </ligand>
</feature>
<feature type="binding site" evidence="2">
    <location>
        <position position="26"/>
    </location>
    <ligand>
        <name>Mg(2+)</name>
        <dbReference type="ChEBI" id="CHEBI:18420"/>
    </ligand>
</feature>
<feature type="binding site" evidence="2">
    <location>
        <begin position="81"/>
        <end position="85"/>
    </location>
    <ligand>
        <name>GTP</name>
        <dbReference type="ChEBI" id="CHEBI:37565"/>
    </ligand>
</feature>
<feature type="binding site" evidence="2">
    <location>
        <begin position="136"/>
        <end position="139"/>
    </location>
    <ligand>
        <name>GTP</name>
        <dbReference type="ChEBI" id="CHEBI:37565"/>
    </ligand>
</feature>
<protein>
    <recommendedName>
        <fullName evidence="2">Elongation factor Tu</fullName>
        <shortName evidence="2">EF-Tu</shortName>
        <ecNumber evidence="2">3.6.5.3</ecNumber>
    </recommendedName>
</protein>
<organism>
    <name type="scientific">Listeria monocytogenes serotype 4b (strain CLIP80459)</name>
    <dbReference type="NCBI Taxonomy" id="568819"/>
    <lineage>
        <taxon>Bacteria</taxon>
        <taxon>Bacillati</taxon>
        <taxon>Bacillota</taxon>
        <taxon>Bacilli</taxon>
        <taxon>Bacillales</taxon>
        <taxon>Listeriaceae</taxon>
        <taxon>Listeria</taxon>
    </lineage>
</organism>
<evidence type="ECO:0000250" key="1"/>
<evidence type="ECO:0000255" key="2">
    <source>
        <dbReference type="HAMAP-Rule" id="MF_00118"/>
    </source>
</evidence>
<accession>C1KZK6</accession>
<reference key="1">
    <citation type="journal article" date="2012" name="BMC Genomics">
        <title>Comparative genomics and transcriptomics of lineages I, II, and III strains of Listeria monocytogenes.</title>
        <authorList>
            <person name="Hain T."/>
            <person name="Ghai R."/>
            <person name="Billion A."/>
            <person name="Kuenne C.T."/>
            <person name="Steinweg C."/>
            <person name="Izar B."/>
            <person name="Mohamed W."/>
            <person name="Mraheil M."/>
            <person name="Domann E."/>
            <person name="Schaffrath S."/>
            <person name="Karst U."/>
            <person name="Goesmann A."/>
            <person name="Oehm S."/>
            <person name="Puhler A."/>
            <person name="Merkl R."/>
            <person name="Vorwerk S."/>
            <person name="Glaser P."/>
            <person name="Garrido P."/>
            <person name="Rusniok C."/>
            <person name="Buchrieser C."/>
            <person name="Goebel W."/>
            <person name="Chakraborty T."/>
        </authorList>
    </citation>
    <scope>NUCLEOTIDE SEQUENCE [LARGE SCALE GENOMIC DNA]</scope>
    <source>
        <strain>CLIP80459</strain>
    </source>
</reference>
<dbReference type="EC" id="3.6.5.3" evidence="2"/>
<dbReference type="EMBL" id="FM242711">
    <property type="protein sequence ID" value="CAS06379.1"/>
    <property type="molecule type" value="Genomic_DNA"/>
</dbReference>
<dbReference type="RefSeq" id="WP_003723640.1">
    <property type="nucleotide sequence ID" value="NC_012488.1"/>
</dbReference>
<dbReference type="SMR" id="C1KZK6"/>
<dbReference type="GeneID" id="61190526"/>
<dbReference type="KEGG" id="lmc:Lm4b_02625"/>
<dbReference type="HOGENOM" id="CLU_007265_0_0_9"/>
<dbReference type="GO" id="GO:0005829">
    <property type="term" value="C:cytosol"/>
    <property type="evidence" value="ECO:0007669"/>
    <property type="project" value="TreeGrafter"/>
</dbReference>
<dbReference type="GO" id="GO:0005525">
    <property type="term" value="F:GTP binding"/>
    <property type="evidence" value="ECO:0007669"/>
    <property type="project" value="UniProtKB-UniRule"/>
</dbReference>
<dbReference type="GO" id="GO:0003924">
    <property type="term" value="F:GTPase activity"/>
    <property type="evidence" value="ECO:0007669"/>
    <property type="project" value="InterPro"/>
</dbReference>
<dbReference type="GO" id="GO:0003746">
    <property type="term" value="F:translation elongation factor activity"/>
    <property type="evidence" value="ECO:0007669"/>
    <property type="project" value="UniProtKB-UniRule"/>
</dbReference>
<dbReference type="CDD" id="cd01884">
    <property type="entry name" value="EF_Tu"/>
    <property type="match status" value="1"/>
</dbReference>
<dbReference type="CDD" id="cd03697">
    <property type="entry name" value="EFTU_II"/>
    <property type="match status" value="1"/>
</dbReference>
<dbReference type="CDD" id="cd03707">
    <property type="entry name" value="EFTU_III"/>
    <property type="match status" value="1"/>
</dbReference>
<dbReference type="FunFam" id="2.40.30.10:FF:000001">
    <property type="entry name" value="Elongation factor Tu"/>
    <property type="match status" value="1"/>
</dbReference>
<dbReference type="FunFam" id="3.40.50.300:FF:000003">
    <property type="entry name" value="Elongation factor Tu"/>
    <property type="match status" value="1"/>
</dbReference>
<dbReference type="Gene3D" id="3.40.50.300">
    <property type="entry name" value="P-loop containing nucleotide triphosphate hydrolases"/>
    <property type="match status" value="1"/>
</dbReference>
<dbReference type="Gene3D" id="2.40.30.10">
    <property type="entry name" value="Translation factors"/>
    <property type="match status" value="2"/>
</dbReference>
<dbReference type="HAMAP" id="MF_00118_B">
    <property type="entry name" value="EF_Tu_B"/>
    <property type="match status" value="1"/>
</dbReference>
<dbReference type="InterPro" id="IPR041709">
    <property type="entry name" value="EF-Tu_GTP-bd"/>
</dbReference>
<dbReference type="InterPro" id="IPR050055">
    <property type="entry name" value="EF-Tu_GTPase"/>
</dbReference>
<dbReference type="InterPro" id="IPR004161">
    <property type="entry name" value="EFTu-like_2"/>
</dbReference>
<dbReference type="InterPro" id="IPR033720">
    <property type="entry name" value="EFTU_2"/>
</dbReference>
<dbReference type="InterPro" id="IPR031157">
    <property type="entry name" value="G_TR_CS"/>
</dbReference>
<dbReference type="InterPro" id="IPR027417">
    <property type="entry name" value="P-loop_NTPase"/>
</dbReference>
<dbReference type="InterPro" id="IPR005225">
    <property type="entry name" value="Small_GTP-bd"/>
</dbReference>
<dbReference type="InterPro" id="IPR000795">
    <property type="entry name" value="T_Tr_GTP-bd_dom"/>
</dbReference>
<dbReference type="InterPro" id="IPR009000">
    <property type="entry name" value="Transl_B-barrel_sf"/>
</dbReference>
<dbReference type="InterPro" id="IPR009001">
    <property type="entry name" value="Transl_elong_EF1A/Init_IF2_C"/>
</dbReference>
<dbReference type="InterPro" id="IPR004541">
    <property type="entry name" value="Transl_elong_EFTu/EF1A_bac/org"/>
</dbReference>
<dbReference type="InterPro" id="IPR004160">
    <property type="entry name" value="Transl_elong_EFTu/EF1A_C"/>
</dbReference>
<dbReference type="NCBIfam" id="TIGR00485">
    <property type="entry name" value="EF-Tu"/>
    <property type="match status" value="1"/>
</dbReference>
<dbReference type="NCBIfam" id="NF000766">
    <property type="entry name" value="PRK00049.1"/>
    <property type="match status" value="1"/>
</dbReference>
<dbReference type="NCBIfam" id="NF009372">
    <property type="entry name" value="PRK12735.1"/>
    <property type="match status" value="1"/>
</dbReference>
<dbReference type="NCBIfam" id="NF009373">
    <property type="entry name" value="PRK12736.1"/>
    <property type="match status" value="1"/>
</dbReference>
<dbReference type="NCBIfam" id="TIGR00231">
    <property type="entry name" value="small_GTP"/>
    <property type="match status" value="1"/>
</dbReference>
<dbReference type="PANTHER" id="PTHR43721:SF22">
    <property type="entry name" value="ELONGATION FACTOR TU, MITOCHONDRIAL"/>
    <property type="match status" value="1"/>
</dbReference>
<dbReference type="PANTHER" id="PTHR43721">
    <property type="entry name" value="ELONGATION FACTOR TU-RELATED"/>
    <property type="match status" value="1"/>
</dbReference>
<dbReference type="Pfam" id="PF00009">
    <property type="entry name" value="GTP_EFTU"/>
    <property type="match status" value="1"/>
</dbReference>
<dbReference type="Pfam" id="PF03144">
    <property type="entry name" value="GTP_EFTU_D2"/>
    <property type="match status" value="1"/>
</dbReference>
<dbReference type="Pfam" id="PF03143">
    <property type="entry name" value="GTP_EFTU_D3"/>
    <property type="match status" value="1"/>
</dbReference>
<dbReference type="PRINTS" id="PR00315">
    <property type="entry name" value="ELONGATNFCT"/>
</dbReference>
<dbReference type="SUPFAM" id="SSF50465">
    <property type="entry name" value="EF-Tu/eEF-1alpha/eIF2-gamma C-terminal domain"/>
    <property type="match status" value="1"/>
</dbReference>
<dbReference type="SUPFAM" id="SSF52540">
    <property type="entry name" value="P-loop containing nucleoside triphosphate hydrolases"/>
    <property type="match status" value="1"/>
</dbReference>
<dbReference type="SUPFAM" id="SSF50447">
    <property type="entry name" value="Translation proteins"/>
    <property type="match status" value="1"/>
</dbReference>
<dbReference type="PROSITE" id="PS00301">
    <property type="entry name" value="G_TR_1"/>
    <property type="match status" value="1"/>
</dbReference>
<dbReference type="PROSITE" id="PS51722">
    <property type="entry name" value="G_TR_2"/>
    <property type="match status" value="1"/>
</dbReference>
<comment type="function">
    <text evidence="2">GTP hydrolase that promotes the GTP-dependent binding of aminoacyl-tRNA to the A-site of ribosomes during protein biosynthesis.</text>
</comment>
<comment type="catalytic activity">
    <reaction evidence="2">
        <text>GTP + H2O = GDP + phosphate + H(+)</text>
        <dbReference type="Rhea" id="RHEA:19669"/>
        <dbReference type="ChEBI" id="CHEBI:15377"/>
        <dbReference type="ChEBI" id="CHEBI:15378"/>
        <dbReference type="ChEBI" id="CHEBI:37565"/>
        <dbReference type="ChEBI" id="CHEBI:43474"/>
        <dbReference type="ChEBI" id="CHEBI:58189"/>
        <dbReference type="EC" id="3.6.5.3"/>
    </reaction>
    <physiologicalReaction direction="left-to-right" evidence="2">
        <dbReference type="Rhea" id="RHEA:19670"/>
    </physiologicalReaction>
</comment>
<comment type="subunit">
    <text evidence="2">Monomer.</text>
</comment>
<comment type="subcellular location">
    <subcellularLocation>
        <location evidence="2">Cytoplasm</location>
    </subcellularLocation>
</comment>
<comment type="similarity">
    <text evidence="2">Belongs to the TRAFAC class translation factor GTPase superfamily. Classic translation factor GTPase family. EF-Tu/EF-1A subfamily.</text>
</comment>
<proteinExistence type="inferred from homology"/>